<evidence type="ECO:0000250" key="1">
    <source>
        <dbReference type="UniProtKB" id="P03081"/>
    </source>
</evidence>
<evidence type="ECO:0000255" key="2">
    <source>
        <dbReference type="PROSITE-ProRule" id="PRU00286"/>
    </source>
</evidence>
<evidence type="ECO:0000269" key="3">
    <source>
    </source>
</evidence>
<evidence type="ECO:0000269" key="4">
    <source>
    </source>
</evidence>
<evidence type="ECO:0000269" key="5">
    <source>
    </source>
</evidence>
<evidence type="ECO:0000269" key="6">
    <source>
    </source>
</evidence>
<evidence type="ECO:0000269" key="7">
    <source>
    </source>
</evidence>
<evidence type="ECO:0000305" key="8"/>
<comment type="function">
    <text evidence="1 3 4 5 6 7">Promotes efficient viral genome replication by modulating several host signaling pathways including transport network, interferon production or cell cycle progression (PubMed:20485545, PubMed:33092197, PubMed:33849980). Inhibits host PP2A phosphatase activity and thereby prevents agnoprotein dephosphorylation (PubMed:18353419, PubMed:20485545). Inactivation of PP2A also results in the transactivation of cyclin A and cyclin D1 promoters (By similarity). In addition, antagonizes the RIGI-mediated IFN response through interaction with E3 ligase TRIM25 leading to the inhibition of 'Lys-63'-linked ubiquitination of RIGI. Inhibits nucleotide excision repair (NER) pathway which leads to DNA strand breaks during DNA replication and micronuclei formation (PubMed:25744060).</text>
</comment>
<comment type="subunit">
    <text evidence="3 4 6">Interacts with host PPP2R1A; the interaction inhibits PP2A activity (PubMed:20485545). Interacts with agnoprotein; this interaction prevents agnoprotein dephosphorylation by host PP2A (PubMed:18353419). Interacts with host RBL1 and RBL2 (PubMed:20485545). Interacts with SMARCA5 (PubMed:33092197). Interacts with SDHB (PubMed:33092197).</text>
</comment>
<comment type="subcellular location">
    <subcellularLocation>
        <location evidence="6">Host cytoplasm</location>
    </subcellularLocation>
    <subcellularLocation>
        <location evidence="6">Host nucleus</location>
    </subcellularLocation>
</comment>
<comment type="alternative products">
    <event type="alternative splicing"/>
    <isoform>
        <id>P03083-1</id>
        <name>Small t antigen</name>
        <sequence type="displayed"/>
    </isoform>
    <isoform>
        <id>P03072-1</id>
        <name>Large T antigen</name>
        <sequence type="external"/>
    </isoform>
</comment>
<comment type="domain">
    <text evidence="1">The common region of ST and LT proteins comprises the J domain. This domain is essential for multiple viral activities, including virion assembly, viral DNA replication, transformation and transcriptional activation. This domain is also required for cyclin A-transactivating activity of ST.</text>
</comment>
<dbReference type="EMBL" id="J02226">
    <property type="protein sequence ID" value="AAA82103.1"/>
    <property type="molecule type" value="Genomic_DNA"/>
</dbReference>
<dbReference type="EMBL" id="M34921">
    <property type="protein sequence ID" value="AAA46891.2"/>
    <property type="molecule type" value="Genomic_DNA"/>
</dbReference>
<dbReference type="PIR" id="A03620">
    <property type="entry name" value="TVVPAJ"/>
</dbReference>
<dbReference type="RefSeq" id="NP_043513.1">
    <molecule id="P03083-1"/>
    <property type="nucleotide sequence ID" value="NC_001699.1"/>
</dbReference>
<dbReference type="SMR" id="P03083"/>
<dbReference type="GeneID" id="1489521"/>
<dbReference type="KEGG" id="vg:1489521"/>
<dbReference type="OrthoDB" id="14669at10239"/>
<dbReference type="Proteomes" id="UP000008478">
    <property type="component" value="Genome"/>
</dbReference>
<dbReference type="GO" id="GO:0030430">
    <property type="term" value="C:host cell cytoplasm"/>
    <property type="evidence" value="ECO:0007669"/>
    <property type="project" value="UniProtKB-SubCell"/>
</dbReference>
<dbReference type="GO" id="GO:0042025">
    <property type="term" value="C:host cell nucleus"/>
    <property type="evidence" value="ECO:0007669"/>
    <property type="project" value="UniProtKB-SubCell"/>
</dbReference>
<dbReference type="GO" id="GO:0008270">
    <property type="term" value="F:zinc ion binding"/>
    <property type="evidence" value="ECO:0007669"/>
    <property type="project" value="UniProtKB-KW"/>
</dbReference>
<dbReference type="GO" id="GO:0039540">
    <property type="term" value="P:symbiont-mediated suppression of host cytoplasmic pattern recognition receptor signaling pathway via inhibition of RIG-I activity"/>
    <property type="evidence" value="ECO:0007669"/>
    <property type="project" value="UniProtKB-KW"/>
</dbReference>
<dbReference type="CDD" id="cd06257">
    <property type="entry name" value="DnaJ"/>
    <property type="match status" value="1"/>
</dbReference>
<dbReference type="FunFam" id="1.10.287.110:FF:000161">
    <property type="entry name" value="Small t antigen"/>
    <property type="match status" value="1"/>
</dbReference>
<dbReference type="Gene3D" id="1.10.287.110">
    <property type="entry name" value="DnaJ domain"/>
    <property type="match status" value="1"/>
</dbReference>
<dbReference type="Gene3D" id="1.20.120.1860">
    <property type="entry name" value="Small t-antigen, unique domain"/>
    <property type="match status" value="1"/>
</dbReference>
<dbReference type="InterPro" id="IPR001623">
    <property type="entry name" value="DnaJ_domain"/>
</dbReference>
<dbReference type="InterPro" id="IPR036869">
    <property type="entry name" value="J_dom_sf"/>
</dbReference>
<dbReference type="InterPro" id="IPR003354">
    <property type="entry name" value="Papo_T_antigen"/>
</dbReference>
<dbReference type="InterPro" id="IPR036092">
    <property type="entry name" value="Papo_T_antigensf"/>
</dbReference>
<dbReference type="Pfam" id="PF02380">
    <property type="entry name" value="Papo_T_antigen"/>
    <property type="match status" value="1"/>
</dbReference>
<dbReference type="SMART" id="SM00271">
    <property type="entry name" value="DnaJ"/>
    <property type="match status" value="1"/>
</dbReference>
<dbReference type="SUPFAM" id="SSF46565">
    <property type="entry name" value="Chaperone J-domain"/>
    <property type="match status" value="1"/>
</dbReference>
<dbReference type="SUPFAM" id="SSF161240">
    <property type="entry name" value="T-antigen specific domain-like"/>
    <property type="match status" value="1"/>
</dbReference>
<dbReference type="PROSITE" id="PS50076">
    <property type="entry name" value="DNAJ_2"/>
    <property type="match status" value="1"/>
</dbReference>
<feature type="chain" id="PRO_0000115056" description="Small t antigen">
    <location>
        <begin position="1"/>
        <end position="172"/>
    </location>
</feature>
<feature type="domain" description="J" evidence="2">
    <location>
        <begin position="12"/>
        <end position="75"/>
    </location>
</feature>
<feature type="zinc finger region" description="C4-type; atypical">
    <location>
        <begin position="101"/>
        <end position="114"/>
    </location>
</feature>
<feature type="zinc finger region" description="H1C3-type; atypical">
    <location>
        <begin position="120"/>
        <end position="141"/>
    </location>
</feature>
<feature type="modified residue" description="N-acetylmethionine; by host" evidence="1">
    <location>
        <position position="1"/>
    </location>
</feature>
<feature type="mutagenesis site" description="Loss of interaction with host PPP2R1A and significant reduction of viral DNA replication. The nucleotide excision repair (NER) pathway is no longer inhibited." evidence="4 5">
    <original>P</original>
    <variation>A</variation>
    <location>
        <position position="99"/>
    </location>
</feature>
<feature type="sequence conflict" description="In Ref. 2." evidence="8" ref="2">
    <original>A</original>
    <variation>L</variation>
    <location>
        <position position="33"/>
    </location>
</feature>
<organism>
    <name type="scientific">JC polyomavirus</name>
    <name type="common">JCPyV</name>
    <name type="synonym">JCV</name>
    <dbReference type="NCBI Taxonomy" id="10632"/>
    <lineage>
        <taxon>Viruses</taxon>
        <taxon>Monodnaviria</taxon>
        <taxon>Shotokuvirae</taxon>
        <taxon>Cossaviricota</taxon>
        <taxon>Papovaviricetes</taxon>
        <taxon>Sepolyvirales</taxon>
        <taxon>Polyomaviridae</taxon>
        <taxon>Betapolyomavirus</taxon>
        <taxon>Betapolyomavirus secuhominis</taxon>
    </lineage>
</organism>
<protein>
    <recommendedName>
        <fullName>Small t antigen</fullName>
        <shortName>ST</shortName>
        <shortName>ST-AG</shortName>
    </recommendedName>
</protein>
<proteinExistence type="evidence at protein level"/>
<name>ST_POVJC</name>
<accession>P03083</accession>
<keyword id="KW-0007">Acetylation</keyword>
<keyword id="KW-0010">Activator</keyword>
<keyword id="KW-0025">Alternative splicing</keyword>
<keyword id="KW-0244">Early protein</keyword>
<keyword id="KW-1035">Host cytoplasm</keyword>
<keyword id="KW-1048">Host nucleus</keyword>
<keyword id="KW-0945">Host-virus interaction</keyword>
<keyword id="KW-1090">Inhibition of host innate immune response by virus</keyword>
<keyword id="KW-1088">Inhibition of host RIG-I by virus</keyword>
<keyword id="KW-1113">Inhibition of host RLR pathway by virus</keyword>
<keyword id="KW-0479">Metal-binding</keyword>
<keyword id="KW-0553">Oncogene</keyword>
<keyword id="KW-0597">Phosphoprotein</keyword>
<keyword id="KW-1185">Reference proteome</keyword>
<keyword id="KW-0804">Transcription</keyword>
<keyword id="KW-0805">Transcription regulation</keyword>
<keyword id="KW-0899">Viral immunoevasion</keyword>
<keyword id="KW-0862">Zinc</keyword>
<keyword id="KW-0863">Zinc-finger</keyword>
<reference key="1">
    <citation type="journal article" date="1984" name="J. Virol.">
        <title>Human polyomavirus JC virus genome.</title>
        <authorList>
            <person name="Frisque R.J."/>
            <person name="Bream G.L."/>
            <person name="Cannella M.T."/>
        </authorList>
    </citation>
    <scope>NUCLEOTIDE SEQUENCE [GENOMIC DNA]</scope>
</reference>
<reference key="2">
    <citation type="journal article" date="1983" name="Prog. Clin. Biol. Res.">
        <title>Regulatory sequences and virus-cell interactions of JC virus.</title>
        <authorList>
            <person name="Frisque R.J."/>
        </authorList>
    </citation>
    <scope>NUCLEOTIDE SEQUENCE [GENOMIC DNA] OF 1-33</scope>
</reference>
<reference key="3">
    <citation type="journal article" date="2008" name="Virology">
        <title>Dephosphorylation of JC virus agnoprotein by protein phosphatase 2A: inhibition by small t antigen.</title>
        <authorList>
            <person name="Sariyer I.K."/>
            <person name="Khalili K."/>
            <person name="Safak M."/>
        </authorList>
    </citation>
    <scope>FUNCTION</scope>
    <scope>INTERACTION WITH AGNOPROTEIN AND HOST PPP2R1A</scope>
</reference>
<reference key="4">
    <citation type="journal article" date="2010" name="PLoS ONE">
        <title>JC virus small T antigen binds phosphatase PP2A and Rb family proteins and is required for efficient viral DNA replication activity.</title>
        <authorList>
            <person name="Bollag B."/>
            <person name="Hofstetter C.A."/>
            <person name="Reviriego-Mendoza M.M."/>
            <person name="Frisque R.J."/>
        </authorList>
    </citation>
    <scope>FUNCTION</scope>
    <scope>INTERACTION WITH HOST PPP2R1A; RBL1 AND RBL2</scope>
    <scope>MUTAGENESIS OF PRO-99</scope>
</reference>
<reference key="5">
    <citation type="journal article" date="2015" name="Mutagenesis">
        <title>Human JC virus small tumour antigen inhibits nucleotide excision repair and sensitises cells to DNA-damaging agents.</title>
        <authorList>
            <person name="Huang J.L."/>
            <person name="Lin C.S."/>
            <person name="Chang C.C."/>
            <person name="Lu Y.N."/>
            <person name="Hsu Y.L."/>
            <person name="Wong T.Y."/>
            <person name="Wang Y.F."/>
        </authorList>
    </citation>
    <scope>FUNCTION</scope>
    <scope>MUTAGENESIS OF PRO-99</scope>
</reference>
<reference key="6">
    <citation type="journal article" date="2020" name="Viruses">
        <title>A Comprehensive Proteomics Analysis of the JC Virus (JCV) Large and Small Tumor Antigen Interacting Proteins: Large T Primarily Targets the Host Protein Complexes with V-ATPase and Ubiquitin Ligase Activities While Small t Mostly Associates with Those Having Phosphatase and Chromatin-Remodeling Functions.</title>
        <authorList>
            <person name="Saribas S."/>
            <person name="Safak M."/>
        </authorList>
    </citation>
    <scope>FUNCTION</scope>
    <scope>SUBCELLULAR LOCATION</scope>
    <scope>INTERACTION WITH HOST SMARCA5 AND SDHB</scope>
</reference>
<reference key="7">
    <citation type="journal article" date="2021" name="MBio">
        <title>The Small t Antigen of JC Virus Antagonizes RIG-I-Mediated Innate Immunity by Inhibiting TRIM25's RNA Binding Ability.</title>
        <authorList>
            <person name="Chiang C."/>
            <person name="Dvorkin S."/>
            <person name="Chiang J.J."/>
            <person name="Potter R.B."/>
            <person name="Gack M.U."/>
        </authorList>
    </citation>
    <scope>FUNCTION</scope>
    <scope>INTERACTION WITH HOST TRIM25</scope>
</reference>
<organismHost>
    <name type="scientific">Homo sapiens</name>
    <name type="common">Human</name>
    <dbReference type="NCBI Taxonomy" id="9606"/>
</organismHost>
<sequence length="172" mass="20238">MDKVLNREESMELMDLLGLDRSAWGNIPVMRKAYLKKCKELHPDKGGDEDKMKRMNFLYKKMEQGVKVAHQPDFGTWNSSEVGCDFPPNSDTLYCKEWPNCATNPSVHCPCLMCMLKLRHRNRKFLRSSPLVWIDCYCFDCFRQWFGCDLTQEALHCWEKVLGDTPYRDLKL</sequence>